<accession>Q2GH05</accession>
<proteinExistence type="inferred from homology"/>
<dbReference type="EC" id="6.3.4.4" evidence="1"/>
<dbReference type="EMBL" id="CP000236">
    <property type="protein sequence ID" value="ABD44893.1"/>
    <property type="molecule type" value="Genomic_DNA"/>
</dbReference>
<dbReference type="RefSeq" id="WP_006011113.1">
    <property type="nucleotide sequence ID" value="NC_007799.1"/>
</dbReference>
<dbReference type="SMR" id="Q2GH05"/>
<dbReference type="STRING" id="205920.ECH_0461"/>
<dbReference type="KEGG" id="ech:ECH_0461"/>
<dbReference type="eggNOG" id="COG0104">
    <property type="taxonomic scope" value="Bacteria"/>
</dbReference>
<dbReference type="HOGENOM" id="CLU_029848_0_0_5"/>
<dbReference type="OrthoDB" id="9807553at2"/>
<dbReference type="UniPathway" id="UPA00075">
    <property type="reaction ID" value="UER00335"/>
</dbReference>
<dbReference type="Proteomes" id="UP000008320">
    <property type="component" value="Chromosome"/>
</dbReference>
<dbReference type="GO" id="GO:0005737">
    <property type="term" value="C:cytoplasm"/>
    <property type="evidence" value="ECO:0007669"/>
    <property type="project" value="UniProtKB-SubCell"/>
</dbReference>
<dbReference type="GO" id="GO:0004019">
    <property type="term" value="F:adenylosuccinate synthase activity"/>
    <property type="evidence" value="ECO:0007669"/>
    <property type="project" value="UniProtKB-UniRule"/>
</dbReference>
<dbReference type="GO" id="GO:0005525">
    <property type="term" value="F:GTP binding"/>
    <property type="evidence" value="ECO:0007669"/>
    <property type="project" value="UniProtKB-UniRule"/>
</dbReference>
<dbReference type="GO" id="GO:0000287">
    <property type="term" value="F:magnesium ion binding"/>
    <property type="evidence" value="ECO:0007669"/>
    <property type="project" value="UniProtKB-UniRule"/>
</dbReference>
<dbReference type="GO" id="GO:0044208">
    <property type="term" value="P:'de novo' AMP biosynthetic process"/>
    <property type="evidence" value="ECO:0007669"/>
    <property type="project" value="UniProtKB-UniRule"/>
</dbReference>
<dbReference type="GO" id="GO:0046040">
    <property type="term" value="P:IMP metabolic process"/>
    <property type="evidence" value="ECO:0007669"/>
    <property type="project" value="TreeGrafter"/>
</dbReference>
<dbReference type="CDD" id="cd03108">
    <property type="entry name" value="AdSS"/>
    <property type="match status" value="1"/>
</dbReference>
<dbReference type="FunFam" id="1.10.300.10:FF:000001">
    <property type="entry name" value="Adenylosuccinate synthetase"/>
    <property type="match status" value="1"/>
</dbReference>
<dbReference type="FunFam" id="3.90.170.10:FF:000001">
    <property type="entry name" value="Adenylosuccinate synthetase"/>
    <property type="match status" value="1"/>
</dbReference>
<dbReference type="Gene3D" id="3.40.440.10">
    <property type="entry name" value="Adenylosuccinate Synthetase, subunit A, domain 1"/>
    <property type="match status" value="1"/>
</dbReference>
<dbReference type="Gene3D" id="1.10.300.10">
    <property type="entry name" value="Adenylosuccinate Synthetase, subunit A, domain 2"/>
    <property type="match status" value="1"/>
</dbReference>
<dbReference type="Gene3D" id="3.90.170.10">
    <property type="entry name" value="Adenylosuccinate Synthetase, subunit A, domain 3"/>
    <property type="match status" value="1"/>
</dbReference>
<dbReference type="HAMAP" id="MF_00011">
    <property type="entry name" value="Adenylosucc_synth"/>
    <property type="match status" value="1"/>
</dbReference>
<dbReference type="InterPro" id="IPR018220">
    <property type="entry name" value="Adenylosuccin_syn_GTP-bd"/>
</dbReference>
<dbReference type="InterPro" id="IPR033128">
    <property type="entry name" value="Adenylosuccin_syn_Lys_AS"/>
</dbReference>
<dbReference type="InterPro" id="IPR042109">
    <property type="entry name" value="Adenylosuccinate_synth_dom1"/>
</dbReference>
<dbReference type="InterPro" id="IPR042110">
    <property type="entry name" value="Adenylosuccinate_synth_dom2"/>
</dbReference>
<dbReference type="InterPro" id="IPR042111">
    <property type="entry name" value="Adenylosuccinate_synth_dom3"/>
</dbReference>
<dbReference type="InterPro" id="IPR001114">
    <property type="entry name" value="Adenylosuccinate_synthetase"/>
</dbReference>
<dbReference type="InterPro" id="IPR027417">
    <property type="entry name" value="P-loop_NTPase"/>
</dbReference>
<dbReference type="NCBIfam" id="NF002223">
    <property type="entry name" value="PRK01117.1"/>
    <property type="match status" value="1"/>
</dbReference>
<dbReference type="NCBIfam" id="TIGR00184">
    <property type="entry name" value="purA"/>
    <property type="match status" value="1"/>
</dbReference>
<dbReference type="PANTHER" id="PTHR11846">
    <property type="entry name" value="ADENYLOSUCCINATE SYNTHETASE"/>
    <property type="match status" value="1"/>
</dbReference>
<dbReference type="PANTHER" id="PTHR11846:SF0">
    <property type="entry name" value="ADENYLOSUCCINATE SYNTHETASE"/>
    <property type="match status" value="1"/>
</dbReference>
<dbReference type="Pfam" id="PF00709">
    <property type="entry name" value="Adenylsucc_synt"/>
    <property type="match status" value="1"/>
</dbReference>
<dbReference type="SMART" id="SM00788">
    <property type="entry name" value="Adenylsucc_synt"/>
    <property type="match status" value="1"/>
</dbReference>
<dbReference type="SUPFAM" id="SSF52540">
    <property type="entry name" value="P-loop containing nucleoside triphosphate hydrolases"/>
    <property type="match status" value="1"/>
</dbReference>
<dbReference type="PROSITE" id="PS01266">
    <property type="entry name" value="ADENYLOSUCCIN_SYN_1"/>
    <property type="match status" value="1"/>
</dbReference>
<dbReference type="PROSITE" id="PS00513">
    <property type="entry name" value="ADENYLOSUCCIN_SYN_2"/>
    <property type="match status" value="1"/>
</dbReference>
<sequence>MVNIVVVGLQWGDEGKGKVVDWLSTNADAVVRFQGGNNAGHTIVINDKVYKLNLLPSSVLQNNKLSIIGNGVVLDPYALVSEIDNLKSSGINITTQNLAISESCPLVLSVHKQADILFEQLRQDTIGTTNKGIGPCYADKISRRAIRVCDLLDTKDLLYSKVNHLLIYHNLLRKSLNTPPIKAEDIVNELLNIAPKILPFVQPVWKTIYNLTQQNKTIIFEGAQGTFLDIDHGTYPFVTSSNTIASQAWVGCGINPSNKSYILGLVKAYTTRVGNGPFFTEQNNDIGKIMFKTGKELGTVSNRKRRCGWFDAVLARQAIMLSGVSGLVMTKLDVLDQFSEIKICVKYKYGDKTYDYLPASPHIQSNLEPIYEILPGWQTSTFGSVSYKDLPQNAILYIKKIEEILKVPIHLISTGPERNSMIILNNDFLQ</sequence>
<reference key="1">
    <citation type="journal article" date="2006" name="PLoS Genet.">
        <title>Comparative genomics of emerging human ehrlichiosis agents.</title>
        <authorList>
            <person name="Dunning Hotopp J.C."/>
            <person name="Lin M."/>
            <person name="Madupu R."/>
            <person name="Crabtree J."/>
            <person name="Angiuoli S.V."/>
            <person name="Eisen J.A."/>
            <person name="Seshadri R."/>
            <person name="Ren Q."/>
            <person name="Wu M."/>
            <person name="Utterback T.R."/>
            <person name="Smith S."/>
            <person name="Lewis M."/>
            <person name="Khouri H."/>
            <person name="Zhang C."/>
            <person name="Niu H."/>
            <person name="Lin Q."/>
            <person name="Ohashi N."/>
            <person name="Zhi N."/>
            <person name="Nelson W.C."/>
            <person name="Brinkac L.M."/>
            <person name="Dodson R.J."/>
            <person name="Rosovitz M.J."/>
            <person name="Sundaram J.P."/>
            <person name="Daugherty S.C."/>
            <person name="Davidsen T."/>
            <person name="Durkin A.S."/>
            <person name="Gwinn M.L."/>
            <person name="Haft D.H."/>
            <person name="Selengut J.D."/>
            <person name="Sullivan S.A."/>
            <person name="Zafar N."/>
            <person name="Zhou L."/>
            <person name="Benahmed F."/>
            <person name="Forberger H."/>
            <person name="Halpin R."/>
            <person name="Mulligan S."/>
            <person name="Robinson J."/>
            <person name="White O."/>
            <person name="Rikihisa Y."/>
            <person name="Tettelin H."/>
        </authorList>
    </citation>
    <scope>NUCLEOTIDE SEQUENCE [LARGE SCALE GENOMIC DNA]</scope>
    <source>
        <strain>ATCC CRL-10679 / Arkansas</strain>
    </source>
</reference>
<evidence type="ECO:0000255" key="1">
    <source>
        <dbReference type="HAMAP-Rule" id="MF_00011"/>
    </source>
</evidence>
<comment type="function">
    <text evidence="1">Plays an important role in the de novo pathway of purine nucleotide biosynthesis. Catalyzes the first committed step in the biosynthesis of AMP from IMP.</text>
</comment>
<comment type="catalytic activity">
    <reaction evidence="1">
        <text>IMP + L-aspartate + GTP = N(6)-(1,2-dicarboxyethyl)-AMP + GDP + phosphate + 2 H(+)</text>
        <dbReference type="Rhea" id="RHEA:15753"/>
        <dbReference type="ChEBI" id="CHEBI:15378"/>
        <dbReference type="ChEBI" id="CHEBI:29991"/>
        <dbReference type="ChEBI" id="CHEBI:37565"/>
        <dbReference type="ChEBI" id="CHEBI:43474"/>
        <dbReference type="ChEBI" id="CHEBI:57567"/>
        <dbReference type="ChEBI" id="CHEBI:58053"/>
        <dbReference type="ChEBI" id="CHEBI:58189"/>
        <dbReference type="EC" id="6.3.4.4"/>
    </reaction>
</comment>
<comment type="cofactor">
    <cofactor evidence="1">
        <name>Mg(2+)</name>
        <dbReference type="ChEBI" id="CHEBI:18420"/>
    </cofactor>
    <text evidence="1">Binds 1 Mg(2+) ion per subunit.</text>
</comment>
<comment type="pathway">
    <text evidence="1">Purine metabolism; AMP biosynthesis via de novo pathway; AMP from IMP: step 1/2.</text>
</comment>
<comment type="subunit">
    <text evidence="1">Homodimer.</text>
</comment>
<comment type="subcellular location">
    <subcellularLocation>
        <location evidence="1">Cytoplasm</location>
    </subcellularLocation>
</comment>
<comment type="similarity">
    <text evidence="1">Belongs to the adenylosuccinate synthetase family.</text>
</comment>
<organism>
    <name type="scientific">Ehrlichia chaffeensis (strain ATCC CRL-10679 / Arkansas)</name>
    <dbReference type="NCBI Taxonomy" id="205920"/>
    <lineage>
        <taxon>Bacteria</taxon>
        <taxon>Pseudomonadati</taxon>
        <taxon>Pseudomonadota</taxon>
        <taxon>Alphaproteobacteria</taxon>
        <taxon>Rickettsiales</taxon>
        <taxon>Anaplasmataceae</taxon>
        <taxon>Ehrlichia</taxon>
    </lineage>
</organism>
<keyword id="KW-0963">Cytoplasm</keyword>
<keyword id="KW-0342">GTP-binding</keyword>
<keyword id="KW-0436">Ligase</keyword>
<keyword id="KW-0460">Magnesium</keyword>
<keyword id="KW-0479">Metal-binding</keyword>
<keyword id="KW-0547">Nucleotide-binding</keyword>
<keyword id="KW-0658">Purine biosynthesis</keyword>
<keyword id="KW-1185">Reference proteome</keyword>
<name>PURA_EHRCR</name>
<feature type="chain" id="PRO_1000000816" description="Adenylosuccinate synthetase">
    <location>
        <begin position="1"/>
        <end position="430"/>
    </location>
</feature>
<feature type="active site" description="Proton acceptor" evidence="1">
    <location>
        <position position="13"/>
    </location>
</feature>
<feature type="active site" description="Proton donor" evidence="1">
    <location>
        <position position="41"/>
    </location>
</feature>
<feature type="binding site" evidence="1">
    <location>
        <begin position="12"/>
        <end position="18"/>
    </location>
    <ligand>
        <name>GTP</name>
        <dbReference type="ChEBI" id="CHEBI:37565"/>
    </ligand>
</feature>
<feature type="binding site" description="in other chain" evidence="1">
    <location>
        <begin position="13"/>
        <end position="16"/>
    </location>
    <ligand>
        <name>IMP</name>
        <dbReference type="ChEBI" id="CHEBI:58053"/>
        <note>ligand shared between dimeric partners</note>
    </ligand>
</feature>
<feature type="binding site" evidence="1">
    <location>
        <position position="13"/>
    </location>
    <ligand>
        <name>Mg(2+)</name>
        <dbReference type="ChEBI" id="CHEBI:18420"/>
    </ligand>
</feature>
<feature type="binding site" description="in other chain" evidence="1">
    <location>
        <begin position="38"/>
        <end position="41"/>
    </location>
    <ligand>
        <name>IMP</name>
        <dbReference type="ChEBI" id="CHEBI:58053"/>
        <note>ligand shared between dimeric partners</note>
    </ligand>
</feature>
<feature type="binding site" evidence="1">
    <location>
        <begin position="40"/>
        <end position="42"/>
    </location>
    <ligand>
        <name>GTP</name>
        <dbReference type="ChEBI" id="CHEBI:37565"/>
    </ligand>
</feature>
<feature type="binding site" evidence="1">
    <location>
        <position position="40"/>
    </location>
    <ligand>
        <name>Mg(2+)</name>
        <dbReference type="ChEBI" id="CHEBI:18420"/>
    </ligand>
</feature>
<feature type="binding site" description="in other chain" evidence="1">
    <location>
        <position position="129"/>
    </location>
    <ligand>
        <name>IMP</name>
        <dbReference type="ChEBI" id="CHEBI:58053"/>
        <note>ligand shared between dimeric partners</note>
    </ligand>
</feature>
<feature type="binding site" evidence="1">
    <location>
        <position position="143"/>
    </location>
    <ligand>
        <name>IMP</name>
        <dbReference type="ChEBI" id="CHEBI:58053"/>
        <note>ligand shared between dimeric partners</note>
    </ligand>
</feature>
<feature type="binding site" description="in other chain" evidence="1">
    <location>
        <position position="224"/>
    </location>
    <ligand>
        <name>IMP</name>
        <dbReference type="ChEBI" id="CHEBI:58053"/>
        <note>ligand shared between dimeric partners</note>
    </ligand>
</feature>
<feature type="binding site" description="in other chain" evidence="1">
    <location>
        <position position="239"/>
    </location>
    <ligand>
        <name>IMP</name>
        <dbReference type="ChEBI" id="CHEBI:58053"/>
        <note>ligand shared between dimeric partners</note>
    </ligand>
</feature>
<feature type="binding site" evidence="1">
    <location>
        <begin position="299"/>
        <end position="305"/>
    </location>
    <ligand>
        <name>substrate</name>
    </ligand>
</feature>
<feature type="binding site" description="in other chain" evidence="1">
    <location>
        <position position="303"/>
    </location>
    <ligand>
        <name>IMP</name>
        <dbReference type="ChEBI" id="CHEBI:58053"/>
        <note>ligand shared between dimeric partners</note>
    </ligand>
</feature>
<feature type="binding site" evidence="1">
    <location>
        <position position="305"/>
    </location>
    <ligand>
        <name>GTP</name>
        <dbReference type="ChEBI" id="CHEBI:37565"/>
    </ligand>
</feature>
<feature type="binding site" evidence="1">
    <location>
        <begin position="331"/>
        <end position="333"/>
    </location>
    <ligand>
        <name>GTP</name>
        <dbReference type="ChEBI" id="CHEBI:37565"/>
    </ligand>
</feature>
<feature type="binding site" evidence="1">
    <location>
        <begin position="413"/>
        <end position="415"/>
    </location>
    <ligand>
        <name>GTP</name>
        <dbReference type="ChEBI" id="CHEBI:37565"/>
    </ligand>
</feature>
<gene>
    <name evidence="1" type="primary">purA</name>
    <name type="ordered locus">ECH_0461</name>
</gene>
<protein>
    <recommendedName>
        <fullName evidence="1">Adenylosuccinate synthetase</fullName>
        <shortName evidence="1">AMPSase</shortName>
        <shortName evidence="1">AdSS</shortName>
        <ecNumber evidence="1">6.3.4.4</ecNumber>
    </recommendedName>
    <alternativeName>
        <fullName evidence="1">IMP--aspartate ligase</fullName>
    </alternativeName>
</protein>